<proteinExistence type="evidence at protein level"/>
<accession>Q69559</accession>
<accession>Q69048</accession>
<protein>
    <recommendedName>
        <fullName>U24 protein</fullName>
    </recommendedName>
</protein>
<feature type="chain" id="PRO_0000342579" description="U24 protein">
    <location>
        <begin position="1"/>
        <end position="87"/>
    </location>
</feature>
<feature type="transmembrane region" description="Helical" evidence="1">
    <location>
        <begin position="59"/>
        <end position="79"/>
    </location>
</feature>
<feature type="short sequence motif" description="PPXY motif" evidence="5">
    <location>
        <begin position="8"/>
        <end position="11"/>
    </location>
</feature>
<feature type="modified residue" description="Phosphothreonine" evidence="4">
    <location>
        <position position="6"/>
    </location>
</feature>
<feature type="mutagenesis site" description="Complete loss of the ability to down-regulate the TCR complex." evidence="3">
    <original>PPP</original>
    <variation>AAA</variation>
    <location>
        <begin position="7"/>
        <end position="9"/>
    </location>
</feature>
<feature type="mutagenesis site" description="Complete loss of the ability to down-regulate the TCR complex." evidence="3">
    <original>PPSY</original>
    <variation>AAA</variation>
    <location>
        <begin position="8"/>
        <end position="11"/>
    </location>
</feature>
<feature type="mutagenesis site" description="Complete loss of interaction with host ITCH." evidence="5">
    <original>Y</original>
    <variation>A</variation>
    <location>
        <position position="11"/>
    </location>
</feature>
<feature type="mutagenesis site" description="Almost complete loss of the ability to down-regulate the TCR complex." evidence="3">
    <original>RRK</original>
    <variation>QQQ</variation>
    <location>
        <begin position="53"/>
        <end position="55"/>
    </location>
</feature>
<reference key="1">
    <citation type="journal article" date="1994" name="J. Virol.">
        <title>Nucleotide sequence analysis of a 38.5-kilobase-pair region of the genome of human herpesvirus 6 encoding human cytomegalovirus immediate-early gene homologs and transactivating functions.</title>
        <authorList>
            <person name="Nicholas J."/>
            <person name="Martin M.E.D."/>
        </authorList>
    </citation>
    <scope>NUCLEOTIDE SEQUENCE [GENOMIC DNA]</scope>
</reference>
<reference key="2">
    <citation type="journal article" date="1995" name="Virology">
        <title>The DNA sequence of human herpesvirus-6: structure, coding content, and genome evolution.</title>
        <authorList>
            <person name="Gompels U.A."/>
            <person name="Nicholas J."/>
            <person name="Lawrence G.L."/>
            <person name="Jones M."/>
            <person name="Thomson B.J."/>
            <person name="Martin M.E.D."/>
            <person name="Efstathiou S."/>
            <person name="Craxton M.A."/>
            <person name="Macaulay H.A."/>
        </authorList>
    </citation>
    <scope>NUCLEOTIDE SEQUENCE [LARGE SCALE GENOMIC DNA]</scope>
</reference>
<reference key="3">
    <citation type="journal article" date="2008" name="J. Virol.">
        <title>Downregulation of the T-cell receptor complex and impairment of T-cell activation by human herpesvirus 6 u24 protein.</title>
        <authorList>
            <person name="Sullivan B.M."/>
            <person name="Coscoy L."/>
        </authorList>
    </citation>
    <scope>FUNCTION</scope>
    <source>
        <strain>GS</strain>
    </source>
</reference>
<reference key="4">
    <citation type="journal article" date="2010" name="J. Virol.">
        <title>The U24 protein from human herpesvirus 6 and 7 affects endocytic recycling.</title>
        <authorList>
            <person name="Sullivan B.M."/>
            <person name="Coscoy L."/>
        </authorList>
    </citation>
    <scope>FUNCTION</scope>
    <scope>MUTAGENESIS OF 8-PRO--TYR-11; 7-PRO--PRO-9 AND 53-ARG--ARG-55</scope>
    <scope>SUBCELLULAR LOCATION</scope>
    <source>
        <strain>GS</strain>
    </source>
</reference>
<reference key="5">
    <citation type="journal article" date="2017" name="Sci. Rep.">
        <title>U24 from Roseolovirus interacts strongly with Nedd4 WW Domains.</title>
        <authorList>
            <person name="Sang Y."/>
            <person name="Zhang R."/>
            <person name="Scott W.R."/>
            <person name="Creagh A.L."/>
            <person name="Haynes C.A."/>
            <person name="Straus S.K."/>
        </authorList>
    </citation>
    <scope>PHOSPHORYLATION AT THR-6</scope>
    <scope>INTERACTION WITH NEDD4 WW DOMAINS</scope>
</reference>
<reference key="6">
    <citation type="journal article" date="2018" name="Sci. Rep.">
        <title>Herpesviruses possess conserved proteins for interaction with Nedd4 family ubiquitin E3 ligases.</title>
        <authorList>
            <person name="Koshizuka T."/>
            <person name="Kobayashi T."/>
            <person name="Ishioka K."/>
            <person name="Suzutani T."/>
        </authorList>
    </citation>
    <scope>INTERACTION WITH HOST ITCH</scope>
    <scope>DOMAIN</scope>
    <scope>MUTAGENESIS OF TYR-11</scope>
</reference>
<evidence type="ECO:0000255" key="1"/>
<evidence type="ECO:0000269" key="2">
    <source>
    </source>
</evidence>
<evidence type="ECO:0000269" key="3">
    <source>
    </source>
</evidence>
<evidence type="ECO:0000269" key="4">
    <source>
    </source>
</evidence>
<evidence type="ECO:0000269" key="5">
    <source>
    </source>
</evidence>
<evidence type="ECO:0000305" key="6"/>
<evidence type="ECO:0000305" key="7">
    <source>
    </source>
</evidence>
<evidence type="ECO:0000305" key="8">
    <source>
    </source>
</evidence>
<organismHost>
    <name type="scientific">Homo sapiens</name>
    <name type="common">Human</name>
    <dbReference type="NCBI Taxonomy" id="9606"/>
</organismHost>
<name>U24_HHV6U</name>
<keyword id="KW-0472">Membrane</keyword>
<keyword id="KW-0597">Phosphoprotein</keyword>
<keyword id="KW-1185">Reference proteome</keyword>
<keyword id="KW-0812">Transmembrane</keyword>
<keyword id="KW-1133">Transmembrane helix</keyword>
<organism>
    <name type="scientific">Human herpesvirus 6A (strain Uganda-1102)</name>
    <name type="common">HHV-6 variant A</name>
    <name type="synonym">Human B lymphotropic virus</name>
    <dbReference type="NCBI Taxonomy" id="10370"/>
    <lineage>
        <taxon>Viruses</taxon>
        <taxon>Duplodnaviria</taxon>
        <taxon>Heunggongvirae</taxon>
        <taxon>Peploviricota</taxon>
        <taxon>Herviviricetes</taxon>
        <taxon>Herpesvirales</taxon>
        <taxon>Orthoherpesviridae</taxon>
        <taxon>Betaherpesvirinae</taxon>
        <taxon>Roseolovirus</taxon>
        <taxon>Roseolovirus humanbeta6a</taxon>
        <taxon>Human betaherpesvirus 6A</taxon>
    </lineage>
</organism>
<sequence>MDPPRTPPPSYSEVLMMDVMCGQVSPHVINDTSFVECIPPPQSRPAWNLWNNRRKTFSFLVLTGLAIAMILFIVFVLYVFHVNRQRR</sequence>
<comment type="function">
    <text evidence="2 3">Down-regulates the TCR/CD3E complex and the transferrin receptor TFRC in host T-cells by blocking them from recycling back to the cell surface.</text>
</comment>
<comment type="subunit">
    <text evidence="7 8">Interacts with host ITCH; this interaction probably mediates ITCH degradation (Probable). Interacts probably with NEDD4 (Probable).</text>
</comment>
<comment type="interaction">
    <interactant intactId="EBI-8015758">
        <id>Q69559</id>
    </interactant>
    <interactant intactId="EBI-959949">
        <id>P28482</id>
        <label>MAPK1</label>
    </interactant>
    <organismsDiffer>true</organismsDiffer>
    <experiments>2</experiments>
</comment>
<comment type="subcellular location">
    <subcellularLocation>
        <location evidence="3">Membrane</location>
        <topology evidence="6">Single-pass membrane protein</topology>
    </subcellularLocation>
</comment>
<comment type="domain">
    <text evidence="5">Late-budding domains (L domains) are short sequence motifs essential for viral particle budding. They recruit proteins of the host ESCRT machinery (Endosomal Sorting Complex Required for Transport) or ESCRT-associated proteins. Contains one L domain: a PPXY motif which is involved in the interaction with Itch, a member of the Nedd4 family.</text>
</comment>
<comment type="sequence caution" evidence="6">
    <conflict type="erroneous initiation">
        <sequence resource="EMBL-CDS" id="AAA16731"/>
    </conflict>
    <text>Extended N-terminus.</text>
</comment>
<dbReference type="EMBL" id="L25528">
    <property type="protein sequence ID" value="AAA16731.1"/>
    <property type="status" value="ALT_INIT"/>
    <property type="molecule type" value="Genomic_DNA"/>
</dbReference>
<dbReference type="EMBL" id="X83413">
    <property type="protein sequence ID" value="CAA58404.1"/>
    <property type="molecule type" value="Genomic_DNA"/>
</dbReference>
<dbReference type="PIR" id="T09318">
    <property type="entry name" value="T09318"/>
</dbReference>
<dbReference type="RefSeq" id="NP_042917.1">
    <property type="nucleotide sequence ID" value="NC_001664.2"/>
</dbReference>
<dbReference type="SMR" id="Q69559"/>
<dbReference type="IntAct" id="Q69559">
    <property type="interactions" value="1"/>
</dbReference>
<dbReference type="MINT" id="Q69559"/>
<dbReference type="iPTMnet" id="Q69559"/>
<dbReference type="DNASU" id="1487899"/>
<dbReference type="GeneID" id="1487899"/>
<dbReference type="KEGG" id="vg:1487899"/>
<dbReference type="Proteomes" id="UP000009295">
    <property type="component" value="Segment"/>
</dbReference>
<dbReference type="GO" id="GO:0016020">
    <property type="term" value="C:membrane"/>
    <property type="evidence" value="ECO:0007669"/>
    <property type="project" value="UniProtKB-SubCell"/>
</dbReference>
<gene>
    <name type="primary">U24</name>
    <name type="synonym">EoLF1</name>
</gene>